<evidence type="ECO:0000255" key="1">
    <source>
        <dbReference type="HAMAP-Rule" id="MF_01589"/>
    </source>
</evidence>
<protein>
    <recommendedName>
        <fullName evidence="1">Carboxy-S-adenosyl-L-methionine synthase</fullName>
        <shortName evidence="1">Cx-SAM synthase</shortName>
        <ecNumber evidence="1">2.1.3.-</ecNumber>
    </recommendedName>
</protein>
<name>CMOA_ECOLC</name>
<accession>B1J0L8</accession>
<proteinExistence type="inferred from homology"/>
<comment type="function">
    <text evidence="1">Catalyzes the conversion of S-adenosyl-L-methionine (SAM) to carboxy-S-adenosyl-L-methionine (Cx-SAM).</text>
</comment>
<comment type="catalytic activity">
    <reaction evidence="1">
        <text>prephenate + S-adenosyl-L-methionine = carboxy-S-adenosyl-L-methionine + 3-phenylpyruvate + H2O</text>
        <dbReference type="Rhea" id="RHEA:51692"/>
        <dbReference type="ChEBI" id="CHEBI:15377"/>
        <dbReference type="ChEBI" id="CHEBI:18005"/>
        <dbReference type="ChEBI" id="CHEBI:29934"/>
        <dbReference type="ChEBI" id="CHEBI:59789"/>
        <dbReference type="ChEBI" id="CHEBI:134278"/>
    </reaction>
</comment>
<comment type="subunit">
    <text evidence="1">Homodimer.</text>
</comment>
<comment type="similarity">
    <text evidence="1">Belongs to the class I-like SAM-binding methyltransferase superfamily. Cx-SAM synthase family.</text>
</comment>
<feature type="chain" id="PRO_1000087960" description="Carboxy-S-adenosyl-L-methionine synthase">
    <location>
        <begin position="1"/>
        <end position="247"/>
    </location>
</feature>
<feature type="binding site" evidence="1">
    <location>
        <position position="39"/>
    </location>
    <ligand>
        <name>S-adenosyl-L-methionine</name>
        <dbReference type="ChEBI" id="CHEBI:59789"/>
    </ligand>
</feature>
<feature type="binding site" evidence="1">
    <location>
        <begin position="64"/>
        <end position="66"/>
    </location>
    <ligand>
        <name>S-adenosyl-L-methionine</name>
        <dbReference type="ChEBI" id="CHEBI:59789"/>
    </ligand>
</feature>
<feature type="binding site" evidence="1">
    <location>
        <begin position="89"/>
        <end position="90"/>
    </location>
    <ligand>
        <name>S-adenosyl-L-methionine</name>
        <dbReference type="ChEBI" id="CHEBI:59789"/>
    </ligand>
</feature>
<feature type="binding site" evidence="1">
    <location>
        <begin position="117"/>
        <end position="118"/>
    </location>
    <ligand>
        <name>S-adenosyl-L-methionine</name>
        <dbReference type="ChEBI" id="CHEBI:59789"/>
    </ligand>
</feature>
<feature type="binding site" evidence="1">
    <location>
        <position position="132"/>
    </location>
    <ligand>
        <name>S-adenosyl-L-methionine</name>
        <dbReference type="ChEBI" id="CHEBI:59789"/>
    </ligand>
</feature>
<feature type="binding site" evidence="1">
    <location>
        <position position="199"/>
    </location>
    <ligand>
        <name>S-adenosyl-L-methionine</name>
        <dbReference type="ChEBI" id="CHEBI:59789"/>
    </ligand>
</feature>
<gene>
    <name evidence="1" type="primary">cmoA</name>
    <name type="ordered locus">EcolC_1762</name>
</gene>
<organism>
    <name type="scientific">Escherichia coli (strain ATCC 8739 / DSM 1576 / NBRC 3972 / NCIMB 8545 / WDCM 00012 / Crooks)</name>
    <dbReference type="NCBI Taxonomy" id="481805"/>
    <lineage>
        <taxon>Bacteria</taxon>
        <taxon>Pseudomonadati</taxon>
        <taxon>Pseudomonadota</taxon>
        <taxon>Gammaproteobacteria</taxon>
        <taxon>Enterobacterales</taxon>
        <taxon>Enterobacteriaceae</taxon>
        <taxon>Escherichia</taxon>
    </lineage>
</organism>
<sequence>MSHRDTLFSAPIARLGDWTFDERVAEVFPDMIQRSVPGYSNIISMIGMLAERFVQPGTQVYDLGCSLGAATLSVRRNIHHDNCKIIAIDNSPAMIERCRRHIDAYKAPTPVDVIEGDIRDIAIENASMVVLNFTLQFLEPSERQALLDKIYQGLNPGGALVLSEKFSFEDAKVGELLFNMHHDFKRANGYSELEISQKRSMLENVMLTDSVETHKARLHKAGFEHSELWFQCFNFGSLVALKAEDAA</sequence>
<reference key="1">
    <citation type="submission" date="2008-02" db="EMBL/GenBank/DDBJ databases">
        <title>Complete sequence of Escherichia coli C str. ATCC 8739.</title>
        <authorList>
            <person name="Copeland A."/>
            <person name="Lucas S."/>
            <person name="Lapidus A."/>
            <person name="Glavina del Rio T."/>
            <person name="Dalin E."/>
            <person name="Tice H."/>
            <person name="Bruce D."/>
            <person name="Goodwin L."/>
            <person name="Pitluck S."/>
            <person name="Kiss H."/>
            <person name="Brettin T."/>
            <person name="Detter J.C."/>
            <person name="Han C."/>
            <person name="Kuske C.R."/>
            <person name="Schmutz J."/>
            <person name="Larimer F."/>
            <person name="Land M."/>
            <person name="Hauser L."/>
            <person name="Kyrpides N."/>
            <person name="Mikhailova N."/>
            <person name="Ingram L."/>
            <person name="Richardson P."/>
        </authorList>
    </citation>
    <scope>NUCLEOTIDE SEQUENCE [LARGE SCALE GENOMIC DNA]</scope>
    <source>
        <strain>ATCC 8739 / DSM 1576 / NBRC 3972 / NCIMB 8545 / WDCM 00012 / Crooks</strain>
    </source>
</reference>
<dbReference type="EC" id="2.1.3.-" evidence="1"/>
<dbReference type="EMBL" id="CP000946">
    <property type="protein sequence ID" value="ACA77412.1"/>
    <property type="molecule type" value="Genomic_DNA"/>
</dbReference>
<dbReference type="RefSeq" id="WP_000019588.1">
    <property type="nucleotide sequence ID" value="NZ_MTFT01000011.1"/>
</dbReference>
<dbReference type="SMR" id="B1J0L8"/>
<dbReference type="GeneID" id="75202724"/>
<dbReference type="KEGG" id="ecl:EcolC_1762"/>
<dbReference type="HOGENOM" id="CLU_078475_0_0_6"/>
<dbReference type="GO" id="GO:0016743">
    <property type="term" value="F:carboxyl- or carbamoyltransferase activity"/>
    <property type="evidence" value="ECO:0007669"/>
    <property type="project" value="UniProtKB-UniRule"/>
</dbReference>
<dbReference type="GO" id="GO:1904047">
    <property type="term" value="F:S-adenosyl-L-methionine binding"/>
    <property type="evidence" value="ECO:0007669"/>
    <property type="project" value="UniProtKB-UniRule"/>
</dbReference>
<dbReference type="GO" id="GO:0002098">
    <property type="term" value="P:tRNA wobble uridine modification"/>
    <property type="evidence" value="ECO:0007669"/>
    <property type="project" value="InterPro"/>
</dbReference>
<dbReference type="CDD" id="cd02440">
    <property type="entry name" value="AdoMet_MTases"/>
    <property type="match status" value="1"/>
</dbReference>
<dbReference type="FunFam" id="3.40.50.150:FF:000030">
    <property type="entry name" value="Carboxy-S-adenosyl-L-methionine synthase"/>
    <property type="match status" value="1"/>
</dbReference>
<dbReference type="Gene3D" id="3.40.50.150">
    <property type="entry name" value="Vaccinia Virus protein VP39"/>
    <property type="match status" value="1"/>
</dbReference>
<dbReference type="HAMAP" id="MF_01589">
    <property type="entry name" value="Cx_SAM_synthase"/>
    <property type="match status" value="1"/>
</dbReference>
<dbReference type="InterPro" id="IPR005271">
    <property type="entry name" value="CmoA"/>
</dbReference>
<dbReference type="InterPro" id="IPR041698">
    <property type="entry name" value="Methyltransf_25"/>
</dbReference>
<dbReference type="InterPro" id="IPR029063">
    <property type="entry name" value="SAM-dependent_MTases_sf"/>
</dbReference>
<dbReference type="NCBIfam" id="TIGR00740">
    <property type="entry name" value="carboxy-S-adenosyl-L-methionine synthase CmoA"/>
    <property type="match status" value="1"/>
</dbReference>
<dbReference type="NCBIfam" id="NF011995">
    <property type="entry name" value="PRK15451.1"/>
    <property type="match status" value="1"/>
</dbReference>
<dbReference type="PANTHER" id="PTHR43861:SF2">
    <property type="entry name" value="CARBOXY-S-ADENOSYL-L-METHIONINE SYNTHASE"/>
    <property type="match status" value="1"/>
</dbReference>
<dbReference type="PANTHER" id="PTHR43861">
    <property type="entry name" value="TRANS-ACONITATE 2-METHYLTRANSFERASE-RELATED"/>
    <property type="match status" value="1"/>
</dbReference>
<dbReference type="Pfam" id="PF13649">
    <property type="entry name" value="Methyltransf_25"/>
    <property type="match status" value="1"/>
</dbReference>
<dbReference type="PIRSF" id="PIRSF006325">
    <property type="entry name" value="MeTrfase_bac"/>
    <property type="match status" value="1"/>
</dbReference>
<dbReference type="SUPFAM" id="SSF53335">
    <property type="entry name" value="S-adenosyl-L-methionine-dependent methyltransferases"/>
    <property type="match status" value="1"/>
</dbReference>
<keyword id="KW-0949">S-adenosyl-L-methionine</keyword>
<keyword id="KW-0808">Transferase</keyword>